<feature type="chain" id="PRO_0000288041" description="NBPF family member NBPF6">
    <location>
        <begin position="1"/>
        <end position="638"/>
    </location>
</feature>
<feature type="domain" description="Olduvai 1" evidence="2">
    <location>
        <begin position="174"/>
        <end position="261"/>
    </location>
</feature>
<feature type="domain" description="Olduvai 2" evidence="2">
    <location>
        <begin position="326"/>
        <end position="399"/>
    </location>
</feature>
<feature type="domain" description="Olduvai 3" evidence="2">
    <location>
        <begin position="400"/>
        <end position="503"/>
    </location>
</feature>
<feature type="region of interest" description="Disordered" evidence="3">
    <location>
        <begin position="157"/>
        <end position="285"/>
    </location>
</feature>
<feature type="region of interest" description="Disordered" evidence="3">
    <location>
        <begin position="563"/>
        <end position="584"/>
    </location>
</feature>
<feature type="coiled-coil region" evidence="1">
    <location>
        <begin position="10"/>
        <end position="43"/>
    </location>
</feature>
<feature type="coiled-coil region" evidence="1">
    <location>
        <begin position="69"/>
        <end position="115"/>
    </location>
</feature>
<feature type="compositionally biased region" description="Acidic residues" evidence="3">
    <location>
        <begin position="165"/>
        <end position="179"/>
    </location>
</feature>
<feature type="compositionally biased region" description="Basic and acidic residues" evidence="3">
    <location>
        <begin position="192"/>
        <end position="202"/>
    </location>
</feature>
<feature type="compositionally biased region" description="Low complexity" evidence="3">
    <location>
        <begin position="214"/>
        <end position="226"/>
    </location>
</feature>
<feature type="compositionally biased region" description="Basic and acidic residues" evidence="3">
    <location>
        <begin position="232"/>
        <end position="251"/>
    </location>
</feature>
<feature type="compositionally biased region" description="Basic and acidic residues" evidence="3">
    <location>
        <begin position="264"/>
        <end position="273"/>
    </location>
</feature>
<feature type="splice variant" id="VSP_053911" description="In isoform 2." evidence="4">
    <original>R</original>
    <variation>RNRQSLEPGELTNLRDFLISPVVSHVANPG</variation>
    <location>
        <position position="279"/>
    </location>
</feature>
<gene>
    <name evidence="6" type="primary">NBPF6</name>
</gene>
<dbReference type="EMBL" id="AL390038">
    <property type="status" value="NOT_ANNOTATED_CDS"/>
    <property type="molecule type" value="Genomic_DNA"/>
</dbReference>
<dbReference type="EMBL" id="AL392088">
    <property type="status" value="NOT_ANNOTATED_CDS"/>
    <property type="molecule type" value="Genomic_DNA"/>
</dbReference>
<dbReference type="EMBL" id="BX323851">
    <property type="status" value="NOT_ANNOTATED_CDS"/>
    <property type="molecule type" value="Genomic_DNA"/>
</dbReference>
<dbReference type="EMBL" id="BX649306">
    <property type="status" value="NOT_ANNOTATED_CDS"/>
    <property type="molecule type" value="Genomic_DNA"/>
</dbReference>
<dbReference type="EMBL" id="BC125161">
    <property type="protein sequence ID" value="AAI25162.1"/>
    <property type="molecule type" value="mRNA"/>
</dbReference>
<dbReference type="CCDS" id="CCDS44184.1">
    <molecule id="Q5VWK0-1"/>
</dbReference>
<dbReference type="RefSeq" id="NP_001137459.1">
    <molecule id="Q5VWK0-2"/>
    <property type="nucleotide sequence ID" value="NM_001143987.2"/>
</dbReference>
<dbReference type="RefSeq" id="NP_001137460.1">
    <molecule id="Q5VWK0-1"/>
    <property type="nucleotide sequence ID" value="NM_001143988.2"/>
</dbReference>
<dbReference type="SMR" id="Q5VWK0"/>
<dbReference type="BioGRID" id="575562">
    <property type="interactions" value="5"/>
</dbReference>
<dbReference type="STRING" id="9606.ENSP00000417277"/>
<dbReference type="iPTMnet" id="Q5VWK0"/>
<dbReference type="PhosphoSitePlus" id="Q5VWK0"/>
<dbReference type="BioMuta" id="NBPF6"/>
<dbReference type="DMDM" id="152123238"/>
<dbReference type="jPOST" id="Q5VWK0"/>
<dbReference type="MassIVE" id="Q5VWK0"/>
<dbReference type="PaxDb" id="9606-ENSP00000402703"/>
<dbReference type="PeptideAtlas" id="Q5VWK0"/>
<dbReference type="ProteomicsDB" id="65532">
    <molecule id="Q5VWK0-1"/>
</dbReference>
<dbReference type="Antibodypedia" id="71921">
    <property type="antibodies" value="47 antibodies from 15 providers"/>
</dbReference>
<dbReference type="DNASU" id="653149"/>
<dbReference type="Ensembl" id="ENST00000370040.7">
    <molecule id="Q5VWK0-2"/>
    <property type="protein sequence ID" value="ENSP00000359057.3"/>
    <property type="gene ID" value="ENSG00000186086.19"/>
</dbReference>
<dbReference type="Ensembl" id="ENST00000495380.7">
    <molecule id="Q5VWK0-1"/>
    <property type="protein sequence ID" value="ENSP00000417277.2"/>
    <property type="gene ID" value="ENSG00000186086.19"/>
</dbReference>
<dbReference type="GeneID" id="653149"/>
<dbReference type="KEGG" id="hsa:653149"/>
<dbReference type="MANE-Select" id="ENST00000495380.7">
    <property type="protein sequence ID" value="ENSP00000417277.2"/>
    <property type="RefSeq nucleotide sequence ID" value="NM_001143988.2"/>
    <property type="RefSeq protein sequence ID" value="NP_001137460.1"/>
</dbReference>
<dbReference type="UCSC" id="uc009wep.3">
    <molecule id="Q5VWK0-1"/>
    <property type="organism name" value="human"/>
</dbReference>
<dbReference type="AGR" id="HGNC:31988"/>
<dbReference type="CTD" id="653149"/>
<dbReference type="DisGeNET" id="653149"/>
<dbReference type="GeneCards" id="NBPF6"/>
<dbReference type="HGNC" id="HGNC:31988">
    <property type="gene designation" value="NBPF6"/>
</dbReference>
<dbReference type="HPA" id="ENSG00000186086">
    <property type="expression patterns" value="Tissue enhanced (liver, testis)"/>
</dbReference>
<dbReference type="MIM" id="613996">
    <property type="type" value="gene"/>
</dbReference>
<dbReference type="neXtProt" id="NX_Q5VWK0"/>
<dbReference type="OpenTargets" id="ENSG00000186086"/>
<dbReference type="PharmGKB" id="PA142671286"/>
<dbReference type="VEuPathDB" id="HostDB:ENSG00000186086"/>
<dbReference type="eggNOG" id="ENOG502RU1I">
    <property type="taxonomic scope" value="Eukaryota"/>
</dbReference>
<dbReference type="GeneTree" id="ENSGT00420000029746"/>
<dbReference type="HOGENOM" id="CLU_030855_0_0_1"/>
<dbReference type="InParanoid" id="Q5VWK0"/>
<dbReference type="OMA" id="NDHDDMK"/>
<dbReference type="OrthoDB" id="9535081at2759"/>
<dbReference type="PAN-GO" id="Q5VWK0">
    <property type="GO annotations" value="0 GO annotations based on evolutionary models"/>
</dbReference>
<dbReference type="PhylomeDB" id="Q5VWK0"/>
<dbReference type="TreeFam" id="TF341151"/>
<dbReference type="PathwayCommons" id="Q5VWK0"/>
<dbReference type="BioGRID-ORCS" id="653149">
    <property type="hits" value="23 hits in 1002 CRISPR screens"/>
</dbReference>
<dbReference type="ChiTaRS" id="NBPF6">
    <property type="organism name" value="human"/>
</dbReference>
<dbReference type="GenomeRNAi" id="653149"/>
<dbReference type="Pharos" id="Q5VWK0">
    <property type="development level" value="Tdark"/>
</dbReference>
<dbReference type="PRO" id="PR:Q5VWK0"/>
<dbReference type="Proteomes" id="UP000005640">
    <property type="component" value="Chromosome 1"/>
</dbReference>
<dbReference type="RNAct" id="Q5VWK0">
    <property type="molecule type" value="protein"/>
</dbReference>
<dbReference type="Bgee" id="ENSG00000186086">
    <property type="expression patterns" value="Expressed in testis and 23 other cell types or tissues"/>
</dbReference>
<dbReference type="ExpressionAtlas" id="Q5VWK0">
    <property type="expression patterns" value="baseline and differential"/>
</dbReference>
<dbReference type="GO" id="GO:0005737">
    <property type="term" value="C:cytoplasm"/>
    <property type="evidence" value="ECO:0007669"/>
    <property type="project" value="UniProtKB-SubCell"/>
</dbReference>
<dbReference type="Gene3D" id="1.20.5.1700">
    <property type="match status" value="1"/>
</dbReference>
<dbReference type="InterPro" id="IPR055306">
    <property type="entry name" value="NBPF"/>
</dbReference>
<dbReference type="InterPro" id="IPR010630">
    <property type="entry name" value="Olduvai_dom"/>
</dbReference>
<dbReference type="PANTHER" id="PTHR14199:SF29">
    <property type="entry name" value="NEUROBLASTOMA BREAKPOINT FAMILY MEMBER 4-RELATED"/>
    <property type="match status" value="1"/>
</dbReference>
<dbReference type="PANTHER" id="PTHR14199">
    <property type="entry name" value="NEUROBLASTOMA BREAKPOINT FAMILY MEMBER 6-LIKE PROTEIN"/>
    <property type="match status" value="1"/>
</dbReference>
<dbReference type="Pfam" id="PF06758">
    <property type="entry name" value="Olduvai"/>
    <property type="match status" value="3"/>
</dbReference>
<dbReference type="SMART" id="SM01148">
    <property type="entry name" value="DUF1220"/>
    <property type="match status" value="4"/>
</dbReference>
<dbReference type="PROSITE" id="PS51316">
    <property type="entry name" value="ODV"/>
    <property type="match status" value="3"/>
</dbReference>
<accession>Q5VWK0</accession>
<accession>A4QN25</accession>
<evidence type="ECO:0000255" key="1"/>
<evidence type="ECO:0000255" key="2">
    <source>
        <dbReference type="PROSITE-ProRule" id="PRU00647"/>
    </source>
</evidence>
<evidence type="ECO:0000256" key="3">
    <source>
        <dbReference type="SAM" id="MobiDB-lite"/>
    </source>
</evidence>
<evidence type="ECO:0000303" key="4">
    <source>
    </source>
</evidence>
<evidence type="ECO:0000305" key="5"/>
<evidence type="ECO:0000312" key="6">
    <source>
        <dbReference type="HGNC" id="HGNC:31988"/>
    </source>
</evidence>
<comment type="subcellular location">
    <subcellularLocation>
        <location evidence="5">Cytoplasm</location>
    </subcellularLocation>
</comment>
<comment type="alternative products">
    <event type="alternative splicing"/>
    <isoform>
        <id>Q5VWK0-1</id>
        <name>1</name>
        <sequence type="displayed"/>
    </isoform>
    <isoform>
        <id>Q5VWK0-2</id>
        <name>2</name>
        <sequence type="described" ref="VSP_053911"/>
    </isoform>
</comment>
<comment type="miscellaneous">
    <text>Encoded by one of the numerous copies of NBPF genes clustered in the p36, p12 and q21 region of the chromosome 1.</text>
</comment>
<comment type="similarity">
    <text evidence="5">Belongs to the NBPF family.</text>
</comment>
<reference key="1">
    <citation type="journal article" date="2006" name="Nature">
        <title>The DNA sequence and biological annotation of human chromosome 1.</title>
        <authorList>
            <person name="Gregory S.G."/>
            <person name="Barlow K.F."/>
            <person name="McLay K.E."/>
            <person name="Kaul R."/>
            <person name="Swarbreck D."/>
            <person name="Dunham A."/>
            <person name="Scott C.E."/>
            <person name="Howe K.L."/>
            <person name="Woodfine K."/>
            <person name="Spencer C.C.A."/>
            <person name="Jones M.C."/>
            <person name="Gillson C."/>
            <person name="Searle S."/>
            <person name="Zhou Y."/>
            <person name="Kokocinski F."/>
            <person name="McDonald L."/>
            <person name="Evans R."/>
            <person name="Phillips K."/>
            <person name="Atkinson A."/>
            <person name="Cooper R."/>
            <person name="Jones C."/>
            <person name="Hall R.E."/>
            <person name="Andrews T.D."/>
            <person name="Lloyd C."/>
            <person name="Ainscough R."/>
            <person name="Almeida J.P."/>
            <person name="Ambrose K.D."/>
            <person name="Anderson F."/>
            <person name="Andrew R.W."/>
            <person name="Ashwell R.I.S."/>
            <person name="Aubin K."/>
            <person name="Babbage A.K."/>
            <person name="Bagguley C.L."/>
            <person name="Bailey J."/>
            <person name="Beasley H."/>
            <person name="Bethel G."/>
            <person name="Bird C.P."/>
            <person name="Bray-Allen S."/>
            <person name="Brown J.Y."/>
            <person name="Brown A.J."/>
            <person name="Buckley D."/>
            <person name="Burton J."/>
            <person name="Bye J."/>
            <person name="Carder C."/>
            <person name="Chapman J.C."/>
            <person name="Clark S.Y."/>
            <person name="Clarke G."/>
            <person name="Clee C."/>
            <person name="Cobley V."/>
            <person name="Collier R.E."/>
            <person name="Corby N."/>
            <person name="Coville G.J."/>
            <person name="Davies J."/>
            <person name="Deadman R."/>
            <person name="Dunn M."/>
            <person name="Earthrowl M."/>
            <person name="Ellington A.G."/>
            <person name="Errington H."/>
            <person name="Frankish A."/>
            <person name="Frankland J."/>
            <person name="French L."/>
            <person name="Garner P."/>
            <person name="Garnett J."/>
            <person name="Gay L."/>
            <person name="Ghori M.R.J."/>
            <person name="Gibson R."/>
            <person name="Gilby L.M."/>
            <person name="Gillett W."/>
            <person name="Glithero R.J."/>
            <person name="Grafham D.V."/>
            <person name="Griffiths C."/>
            <person name="Griffiths-Jones S."/>
            <person name="Grocock R."/>
            <person name="Hammond S."/>
            <person name="Harrison E.S.I."/>
            <person name="Hart E."/>
            <person name="Haugen E."/>
            <person name="Heath P.D."/>
            <person name="Holmes S."/>
            <person name="Holt K."/>
            <person name="Howden P.J."/>
            <person name="Hunt A.R."/>
            <person name="Hunt S.E."/>
            <person name="Hunter G."/>
            <person name="Isherwood J."/>
            <person name="James R."/>
            <person name="Johnson C."/>
            <person name="Johnson D."/>
            <person name="Joy A."/>
            <person name="Kay M."/>
            <person name="Kershaw J.K."/>
            <person name="Kibukawa M."/>
            <person name="Kimberley A.M."/>
            <person name="King A."/>
            <person name="Knights A.J."/>
            <person name="Lad H."/>
            <person name="Laird G."/>
            <person name="Lawlor S."/>
            <person name="Leongamornlert D.A."/>
            <person name="Lloyd D.M."/>
            <person name="Loveland J."/>
            <person name="Lovell J."/>
            <person name="Lush M.J."/>
            <person name="Lyne R."/>
            <person name="Martin S."/>
            <person name="Mashreghi-Mohammadi M."/>
            <person name="Matthews L."/>
            <person name="Matthews N.S.W."/>
            <person name="McLaren S."/>
            <person name="Milne S."/>
            <person name="Mistry S."/>
            <person name="Moore M.J.F."/>
            <person name="Nickerson T."/>
            <person name="O'Dell C.N."/>
            <person name="Oliver K."/>
            <person name="Palmeiri A."/>
            <person name="Palmer S.A."/>
            <person name="Parker A."/>
            <person name="Patel D."/>
            <person name="Pearce A.V."/>
            <person name="Peck A.I."/>
            <person name="Pelan S."/>
            <person name="Phelps K."/>
            <person name="Phillimore B.J."/>
            <person name="Plumb R."/>
            <person name="Rajan J."/>
            <person name="Raymond C."/>
            <person name="Rouse G."/>
            <person name="Saenphimmachak C."/>
            <person name="Sehra H.K."/>
            <person name="Sheridan E."/>
            <person name="Shownkeen R."/>
            <person name="Sims S."/>
            <person name="Skuce C.D."/>
            <person name="Smith M."/>
            <person name="Steward C."/>
            <person name="Subramanian S."/>
            <person name="Sycamore N."/>
            <person name="Tracey A."/>
            <person name="Tromans A."/>
            <person name="Van Helmond Z."/>
            <person name="Wall M."/>
            <person name="Wallis J.M."/>
            <person name="White S."/>
            <person name="Whitehead S.L."/>
            <person name="Wilkinson J.E."/>
            <person name="Willey D.L."/>
            <person name="Williams H."/>
            <person name="Wilming L."/>
            <person name="Wray P.W."/>
            <person name="Wu Z."/>
            <person name="Coulson A."/>
            <person name="Vaudin M."/>
            <person name="Sulston J.E."/>
            <person name="Durbin R.M."/>
            <person name="Hubbard T."/>
            <person name="Wooster R."/>
            <person name="Dunham I."/>
            <person name="Carter N.P."/>
            <person name="McVean G."/>
            <person name="Ross M.T."/>
            <person name="Harrow J."/>
            <person name="Olson M.V."/>
            <person name="Beck S."/>
            <person name="Rogers J."/>
            <person name="Bentley D.R."/>
        </authorList>
    </citation>
    <scope>NUCLEOTIDE SEQUENCE [LARGE SCALE GENOMIC DNA]</scope>
</reference>
<reference key="2">
    <citation type="journal article" date="2004" name="Genome Res.">
        <title>The status, quality, and expansion of the NIH full-length cDNA project: the Mammalian Gene Collection (MGC).</title>
        <authorList>
            <consortium name="The MGC Project Team"/>
        </authorList>
    </citation>
    <scope>NUCLEOTIDE SEQUENCE [LARGE SCALE MRNA] OF 1-573 (ISOFORM 2)</scope>
</reference>
<sequence length="638" mass="72239">MVVSADPLSSERAEMNILEINQELRSQLAESNQQFRDLKEKFLITQATAYSLANQLKKYKCEEYKDIIDSVLRDELQSMEKLAEKLRQAEELRQYKALVHSQAKELTQLREKLREGRDASRWLNKHLKTLLTPDDPDKSQGQDLREQLAEGHRLAEHLVHKLSPENDEDEDEDEDDKDEEVEKVQESPAPREVQKTEEKEVPQDSLEECAVTCSNSHNPSNSNQPHRSTKITFKEHEVDSALVVESEHPHDEEEEALNIPPENQNDHEEEEGKAPVPPRHHDKSNSYRHREVSFLALDEQKVCSAQDVARDYSNPKWDETSLGFLEKQSDLEEVKGQETVAPRLSRGPLRVDKHEIPQESLDGCCLTPSILPDLTPSYHPYWSTLYSFEDKQVSLALVDKIKKDQEEIEDQSPPCPRLSQELPEVKEQEVPEDSVNEVYLTPSVHHDVSDCHQPYSSTLSSLEDQLACSALDVASPTEAACPQGTWSGDLSHHRSEVQISQAQLEPSTLVPSCLRLQLDQGFHCGNGLAQRGLSSTTCSFSANADSGNQWPFQELVLEPSLGMKNPPQLEDDALEGSASNTQGRQVTGRIRASLVLILKTIRRRLPFSKWRLAFRFAGPHAESAEIPNTAERMQRMIG</sequence>
<organism>
    <name type="scientific">Homo sapiens</name>
    <name type="common">Human</name>
    <dbReference type="NCBI Taxonomy" id="9606"/>
    <lineage>
        <taxon>Eukaryota</taxon>
        <taxon>Metazoa</taxon>
        <taxon>Chordata</taxon>
        <taxon>Craniata</taxon>
        <taxon>Vertebrata</taxon>
        <taxon>Euteleostomi</taxon>
        <taxon>Mammalia</taxon>
        <taxon>Eutheria</taxon>
        <taxon>Euarchontoglires</taxon>
        <taxon>Primates</taxon>
        <taxon>Haplorrhini</taxon>
        <taxon>Catarrhini</taxon>
        <taxon>Hominidae</taxon>
        <taxon>Homo</taxon>
    </lineage>
</organism>
<protein>
    <recommendedName>
        <fullName evidence="5">NBPF family member NBPF6</fullName>
    </recommendedName>
    <alternativeName>
        <fullName>Neuroblastoma breakpoint family member 6</fullName>
    </alternativeName>
</protein>
<keyword id="KW-0025">Alternative splicing</keyword>
<keyword id="KW-0175">Coiled coil</keyword>
<keyword id="KW-0963">Cytoplasm</keyword>
<keyword id="KW-1185">Reference proteome</keyword>
<keyword id="KW-0677">Repeat</keyword>
<proteinExistence type="evidence at transcript level"/>
<name>NBPF6_HUMAN</name>